<gene>
    <name type="ordered locus">Pnuc_0753</name>
</gene>
<protein>
    <recommendedName>
        <fullName evidence="1">UPF0246 protein Pnuc_0753</fullName>
    </recommendedName>
</protein>
<name>Y753_POLAQ</name>
<reference key="1">
    <citation type="journal article" date="2012" name="Stand. Genomic Sci.">
        <title>Complete genome sequence of Polynucleobacter necessarius subsp. asymbioticus type strain (QLW-P1DMWA-1(T)).</title>
        <authorList>
            <person name="Meincke L."/>
            <person name="Copeland A."/>
            <person name="Lapidus A."/>
            <person name="Lucas S."/>
            <person name="Berry K.W."/>
            <person name="Del Rio T.G."/>
            <person name="Hammon N."/>
            <person name="Dalin E."/>
            <person name="Tice H."/>
            <person name="Pitluck S."/>
            <person name="Richardson P."/>
            <person name="Bruce D."/>
            <person name="Goodwin L."/>
            <person name="Han C."/>
            <person name="Tapia R."/>
            <person name="Detter J.C."/>
            <person name="Schmutz J."/>
            <person name="Brettin T."/>
            <person name="Larimer F."/>
            <person name="Land M."/>
            <person name="Hauser L."/>
            <person name="Kyrpides N.C."/>
            <person name="Ivanova N."/>
            <person name="Goker M."/>
            <person name="Woyke T."/>
            <person name="Wu Q.L."/>
            <person name="Pockl M."/>
            <person name="Hahn M.W."/>
            <person name="Klenk H.P."/>
        </authorList>
    </citation>
    <scope>NUCLEOTIDE SEQUENCE [LARGE SCALE GENOMIC DNA]</scope>
    <source>
        <strain>DSM 18221 / CIP 109841 / QLW-P1DMWA-1</strain>
    </source>
</reference>
<sequence length="258" mass="29184">MLIVLSPAKSLDYKTPIKVKAPTLPEFASESAKLIAELKKLAPQDVAKLMSLSDQLAVLNVGRYRDWSKKFTVDNSKPAIYAFDGDVYDGFDVKSLNTKAIDFAQDHVRILSGLYGVLRPLDLMQAYRLEMGTSLKNIRGKDLYAFWGGRVTDSLKALLGKQKKPVLLNLASEEYFKVLQPKELDCPVIAPIFQDAKDGKYKIISFYAKRARGLMARYVVENRITDPEDLKGFNLDGYKYFAAESKIDKPVFRRAERK</sequence>
<evidence type="ECO:0000255" key="1">
    <source>
        <dbReference type="HAMAP-Rule" id="MF_00652"/>
    </source>
</evidence>
<accession>A4SWV7</accession>
<keyword id="KW-1185">Reference proteome</keyword>
<organism>
    <name type="scientific">Polynucleobacter asymbioticus (strain DSM 18221 / CIP 109841 / QLW-P1DMWA-1)</name>
    <name type="common">Polynucleobacter necessarius subsp. asymbioticus</name>
    <dbReference type="NCBI Taxonomy" id="312153"/>
    <lineage>
        <taxon>Bacteria</taxon>
        <taxon>Pseudomonadati</taxon>
        <taxon>Pseudomonadota</taxon>
        <taxon>Betaproteobacteria</taxon>
        <taxon>Burkholderiales</taxon>
        <taxon>Burkholderiaceae</taxon>
        <taxon>Polynucleobacter</taxon>
    </lineage>
</organism>
<dbReference type="EMBL" id="CP000655">
    <property type="protein sequence ID" value="ABP33971.1"/>
    <property type="molecule type" value="Genomic_DNA"/>
</dbReference>
<dbReference type="RefSeq" id="WP_011902596.1">
    <property type="nucleotide sequence ID" value="NC_009379.1"/>
</dbReference>
<dbReference type="SMR" id="A4SWV7"/>
<dbReference type="GeneID" id="31481114"/>
<dbReference type="KEGG" id="pnu:Pnuc_0753"/>
<dbReference type="eggNOG" id="COG3022">
    <property type="taxonomic scope" value="Bacteria"/>
</dbReference>
<dbReference type="HOGENOM" id="CLU_061989_0_0_4"/>
<dbReference type="Proteomes" id="UP000000231">
    <property type="component" value="Chromosome"/>
</dbReference>
<dbReference type="GO" id="GO:0005829">
    <property type="term" value="C:cytosol"/>
    <property type="evidence" value="ECO:0007669"/>
    <property type="project" value="TreeGrafter"/>
</dbReference>
<dbReference type="GO" id="GO:0033194">
    <property type="term" value="P:response to hydroperoxide"/>
    <property type="evidence" value="ECO:0007669"/>
    <property type="project" value="TreeGrafter"/>
</dbReference>
<dbReference type="HAMAP" id="MF_00652">
    <property type="entry name" value="UPF0246"/>
    <property type="match status" value="1"/>
</dbReference>
<dbReference type="InterPro" id="IPR005583">
    <property type="entry name" value="YaaA"/>
</dbReference>
<dbReference type="NCBIfam" id="NF002541">
    <property type="entry name" value="PRK02101.1-1"/>
    <property type="match status" value="1"/>
</dbReference>
<dbReference type="NCBIfam" id="NF002542">
    <property type="entry name" value="PRK02101.1-3"/>
    <property type="match status" value="1"/>
</dbReference>
<dbReference type="PANTHER" id="PTHR30283:SF4">
    <property type="entry name" value="PEROXIDE STRESS RESISTANCE PROTEIN YAAA"/>
    <property type="match status" value="1"/>
</dbReference>
<dbReference type="PANTHER" id="PTHR30283">
    <property type="entry name" value="PEROXIDE STRESS RESPONSE PROTEIN YAAA"/>
    <property type="match status" value="1"/>
</dbReference>
<dbReference type="Pfam" id="PF03883">
    <property type="entry name" value="H2O2_YaaD"/>
    <property type="match status" value="1"/>
</dbReference>
<feature type="chain" id="PRO_1000082771" description="UPF0246 protein Pnuc_0753">
    <location>
        <begin position="1"/>
        <end position="258"/>
    </location>
</feature>
<comment type="similarity">
    <text evidence="1">Belongs to the UPF0246 family.</text>
</comment>
<proteinExistence type="inferred from homology"/>